<proteinExistence type="inferred from homology"/>
<evidence type="ECO:0000250" key="1"/>
<evidence type="ECO:0000305" key="2"/>
<feature type="chain" id="PRO_0000156419" description="RNA 3'-terminal phosphate cyclase">
    <location>
        <begin position="1"/>
        <end position="341"/>
    </location>
</feature>
<feature type="active site" description="Tele-AMP-histidine intermediate" evidence="1">
    <location>
        <position position="308"/>
    </location>
</feature>
<feature type="binding site" evidence="1">
    <location>
        <position position="102"/>
    </location>
    <ligand>
        <name>ATP</name>
        <dbReference type="ChEBI" id="CHEBI:30616"/>
    </ligand>
</feature>
<feature type="binding site" evidence="1">
    <location>
        <begin position="283"/>
        <end position="287"/>
    </location>
    <ligand>
        <name>ATP</name>
        <dbReference type="ChEBI" id="CHEBI:30616"/>
    </ligand>
</feature>
<gene>
    <name type="primary">rtcA</name>
    <name type="ordered locus">PA4585</name>
</gene>
<dbReference type="EC" id="6.5.1.4"/>
<dbReference type="EMBL" id="AE004091">
    <property type="protein sequence ID" value="AAG07973.1"/>
    <property type="molecule type" value="Genomic_DNA"/>
</dbReference>
<dbReference type="PIR" id="E83072">
    <property type="entry name" value="E83072"/>
</dbReference>
<dbReference type="RefSeq" id="NP_253275.1">
    <property type="nucleotide sequence ID" value="NC_002516.2"/>
</dbReference>
<dbReference type="RefSeq" id="WP_003112809.1">
    <property type="nucleotide sequence ID" value="NZ_QZGE01000004.1"/>
</dbReference>
<dbReference type="SMR" id="Q9HVJ9"/>
<dbReference type="FunCoup" id="Q9HVJ9">
    <property type="interactions" value="419"/>
</dbReference>
<dbReference type="STRING" id="208964.PA4585"/>
<dbReference type="PaxDb" id="208964-PA4585"/>
<dbReference type="GeneID" id="881010"/>
<dbReference type="KEGG" id="pae:PA4585"/>
<dbReference type="PATRIC" id="fig|208964.12.peg.4799"/>
<dbReference type="PseudoCAP" id="PA4585"/>
<dbReference type="HOGENOM" id="CLU_027882_0_0_6"/>
<dbReference type="InParanoid" id="Q9HVJ9"/>
<dbReference type="OrthoDB" id="9789235at2"/>
<dbReference type="PhylomeDB" id="Q9HVJ9"/>
<dbReference type="BioCyc" id="PAER208964:G1FZ6-4679-MONOMER"/>
<dbReference type="Proteomes" id="UP000002438">
    <property type="component" value="Chromosome"/>
</dbReference>
<dbReference type="GO" id="GO:0005737">
    <property type="term" value="C:cytoplasm"/>
    <property type="evidence" value="ECO:0007669"/>
    <property type="project" value="UniProtKB-SubCell"/>
</dbReference>
<dbReference type="GO" id="GO:0005524">
    <property type="term" value="F:ATP binding"/>
    <property type="evidence" value="ECO:0007669"/>
    <property type="project" value="UniProtKB-KW"/>
</dbReference>
<dbReference type="GO" id="GO:0003963">
    <property type="term" value="F:RNA-3'-phosphate cyclase activity"/>
    <property type="evidence" value="ECO:0000318"/>
    <property type="project" value="GO_Central"/>
</dbReference>
<dbReference type="GO" id="GO:0006396">
    <property type="term" value="P:RNA processing"/>
    <property type="evidence" value="ECO:0007669"/>
    <property type="project" value="InterPro"/>
</dbReference>
<dbReference type="CDD" id="cd00874">
    <property type="entry name" value="RNA_Cyclase_Class_II"/>
    <property type="match status" value="1"/>
</dbReference>
<dbReference type="FunFam" id="3.30.360.20:FF:000003">
    <property type="entry name" value="RNA 3'-terminal phosphate cyclase"/>
    <property type="match status" value="1"/>
</dbReference>
<dbReference type="Gene3D" id="3.65.10.20">
    <property type="entry name" value="RNA 3'-terminal phosphate cyclase domain"/>
    <property type="match status" value="1"/>
</dbReference>
<dbReference type="Gene3D" id="3.30.360.20">
    <property type="entry name" value="RNA 3'-terminal phosphate cyclase, insert domain"/>
    <property type="match status" value="1"/>
</dbReference>
<dbReference type="HAMAP" id="MF_00200">
    <property type="entry name" value="RTC"/>
    <property type="match status" value="1"/>
</dbReference>
<dbReference type="InterPro" id="IPR013791">
    <property type="entry name" value="RNA3'-term_phos_cycl_insert"/>
</dbReference>
<dbReference type="InterPro" id="IPR023797">
    <property type="entry name" value="RNA3'_phos_cyclase_dom"/>
</dbReference>
<dbReference type="InterPro" id="IPR037136">
    <property type="entry name" value="RNA3'_phos_cyclase_dom_sf"/>
</dbReference>
<dbReference type="InterPro" id="IPR000228">
    <property type="entry name" value="RNA3'_term_phos_cyc"/>
</dbReference>
<dbReference type="InterPro" id="IPR017770">
    <property type="entry name" value="RNA3'_term_phos_cyc_type_1"/>
</dbReference>
<dbReference type="InterPro" id="IPR020719">
    <property type="entry name" value="RNA3'_term_phos_cycl-like_CS"/>
</dbReference>
<dbReference type="InterPro" id="IPR013792">
    <property type="entry name" value="RNA3'P_cycl/enolpyr_Trfase_a/b"/>
</dbReference>
<dbReference type="InterPro" id="IPR036553">
    <property type="entry name" value="RPTC_insert"/>
</dbReference>
<dbReference type="NCBIfam" id="NF003246">
    <property type="entry name" value="PRK04204.1-2"/>
    <property type="match status" value="1"/>
</dbReference>
<dbReference type="NCBIfam" id="NF003247">
    <property type="entry name" value="PRK04204.1-3"/>
    <property type="match status" value="1"/>
</dbReference>
<dbReference type="NCBIfam" id="TIGR03399">
    <property type="entry name" value="RNA_3prim_cycl"/>
    <property type="match status" value="1"/>
</dbReference>
<dbReference type="PANTHER" id="PTHR11096">
    <property type="entry name" value="RNA 3' TERMINAL PHOSPHATE CYCLASE"/>
    <property type="match status" value="1"/>
</dbReference>
<dbReference type="PANTHER" id="PTHR11096:SF0">
    <property type="entry name" value="RNA 3'-TERMINAL PHOSPHATE CYCLASE"/>
    <property type="match status" value="1"/>
</dbReference>
<dbReference type="Pfam" id="PF01137">
    <property type="entry name" value="RTC"/>
    <property type="match status" value="1"/>
</dbReference>
<dbReference type="Pfam" id="PF05189">
    <property type="entry name" value="RTC_insert"/>
    <property type="match status" value="1"/>
</dbReference>
<dbReference type="PIRSF" id="PIRSF005378">
    <property type="entry name" value="RNA3'_term_phos_cycl_euk"/>
    <property type="match status" value="1"/>
</dbReference>
<dbReference type="SUPFAM" id="SSF55205">
    <property type="entry name" value="EPT/RTPC-like"/>
    <property type="match status" value="2"/>
</dbReference>
<dbReference type="SUPFAM" id="SSF52913">
    <property type="entry name" value="RNA 3'-terminal phosphate cyclase, RPTC, insert domain"/>
    <property type="match status" value="1"/>
</dbReference>
<dbReference type="PROSITE" id="PS01287">
    <property type="entry name" value="RTC"/>
    <property type="match status" value="1"/>
</dbReference>
<name>RTCA_PSEAE</name>
<comment type="function">
    <text evidence="1">Catalyzes the conversion of 3'-phosphate to a 2',3'-cyclic phosphodiester at the end of RNA. The mechanism of action of the enzyme occurs in 3 steps: (A) adenylation of the enzyme by ATP; (B) transfer of adenylate to an RNA-N3'P to produce RNA-N3'PP5'A; (C) and attack of the adjacent 2'-hydroxyl on the 3'-phosphorus in the diester linkage to produce the cyclic end product. The biological role of this enzyme is unknown but it is likely to function in some aspects of cellular RNA processing (By similarity).</text>
</comment>
<comment type="catalytic activity">
    <reaction>
        <text>a 3'-end 3'-phospho-ribonucleotide-RNA + ATP = a 3'-end 2',3'-cyclophospho-ribonucleotide-RNA + AMP + diphosphate</text>
        <dbReference type="Rhea" id="RHEA:23976"/>
        <dbReference type="Rhea" id="RHEA-COMP:10463"/>
        <dbReference type="Rhea" id="RHEA-COMP:10464"/>
        <dbReference type="ChEBI" id="CHEBI:30616"/>
        <dbReference type="ChEBI" id="CHEBI:33019"/>
        <dbReference type="ChEBI" id="CHEBI:83062"/>
        <dbReference type="ChEBI" id="CHEBI:83064"/>
        <dbReference type="ChEBI" id="CHEBI:456215"/>
        <dbReference type="EC" id="6.5.1.4"/>
    </reaction>
</comment>
<comment type="subcellular location">
    <subcellularLocation>
        <location evidence="2">Cytoplasm</location>
    </subcellularLocation>
</comment>
<comment type="similarity">
    <text evidence="2">Belongs to the RNA 3'-terminal cyclase family. Type 1 subfamily.</text>
</comment>
<protein>
    <recommendedName>
        <fullName>RNA 3'-terminal phosphate cyclase</fullName>
        <shortName>RNA cyclase</shortName>
        <shortName>RNA-3'-phosphate cyclase</shortName>
        <ecNumber>6.5.1.4</ecNumber>
    </recommendedName>
</protein>
<accession>Q9HVJ9</accession>
<keyword id="KW-0067">ATP-binding</keyword>
<keyword id="KW-0963">Cytoplasm</keyword>
<keyword id="KW-0436">Ligase</keyword>
<keyword id="KW-0547">Nucleotide-binding</keyword>
<keyword id="KW-1185">Reference proteome</keyword>
<reference key="1">
    <citation type="journal article" date="2000" name="Nature">
        <title>Complete genome sequence of Pseudomonas aeruginosa PAO1, an opportunistic pathogen.</title>
        <authorList>
            <person name="Stover C.K."/>
            <person name="Pham X.-Q.T."/>
            <person name="Erwin A.L."/>
            <person name="Mizoguchi S.D."/>
            <person name="Warrener P."/>
            <person name="Hickey M.J."/>
            <person name="Brinkman F.S.L."/>
            <person name="Hufnagle W.O."/>
            <person name="Kowalik D.J."/>
            <person name="Lagrou M."/>
            <person name="Garber R.L."/>
            <person name="Goltry L."/>
            <person name="Tolentino E."/>
            <person name="Westbrock-Wadman S."/>
            <person name="Yuan Y."/>
            <person name="Brody L.L."/>
            <person name="Coulter S.N."/>
            <person name="Folger K.R."/>
            <person name="Kas A."/>
            <person name="Larbig K."/>
            <person name="Lim R.M."/>
            <person name="Smith K.A."/>
            <person name="Spencer D.H."/>
            <person name="Wong G.K.-S."/>
            <person name="Wu Z."/>
            <person name="Paulsen I.T."/>
            <person name="Reizer J."/>
            <person name="Saier M.H. Jr."/>
            <person name="Hancock R.E.W."/>
            <person name="Lory S."/>
            <person name="Olson M.V."/>
        </authorList>
    </citation>
    <scope>NUCLEOTIDE SEQUENCE [LARGE SCALE GENOMIC DNA]</scope>
    <source>
        <strain>ATCC 15692 / DSM 22644 / CIP 104116 / JCM 14847 / LMG 12228 / 1C / PRS 101 / PAO1</strain>
    </source>
</reference>
<sequence>MRKDLIELDGSEGGGQILRSALSLSMTSGQPLRIRNIRGRRSRPGLLRQHLTAVRAAAEICAAEVEGAELGSRELAFRPGAIRAGDYAFAIGSAGSCSLVLQTLLPALLAANGESRVRISGGTHNPLAPPADFLRDSWLPLLQRMGAEVDLELLRHGFVPAGGGELLARVRPARWRPLQLEHPGAALRRQARALLAGIPGHVGERELERVRQRLGWSDEERQLEFLAEDQGPGNALLLRIDCEHICATFCAFGQAGVSAERVAEQVATQAIGWMESGCAADEHLADQLLLPMALAGAGSFTTPRLSAHLQSNRRVIERFLPVRIGDQALDGGGHRIVITSA</sequence>
<organism>
    <name type="scientific">Pseudomonas aeruginosa (strain ATCC 15692 / DSM 22644 / CIP 104116 / JCM 14847 / LMG 12228 / 1C / PRS 101 / PAO1)</name>
    <dbReference type="NCBI Taxonomy" id="208964"/>
    <lineage>
        <taxon>Bacteria</taxon>
        <taxon>Pseudomonadati</taxon>
        <taxon>Pseudomonadota</taxon>
        <taxon>Gammaproteobacteria</taxon>
        <taxon>Pseudomonadales</taxon>
        <taxon>Pseudomonadaceae</taxon>
        <taxon>Pseudomonas</taxon>
    </lineage>
</organism>